<gene>
    <name type="primary">TMK</name>
    <name type="ordered locus">CPXV186</name>
</gene>
<comment type="catalytic activity">
    <reaction>
        <text>dTMP + ATP = dTDP + ADP</text>
        <dbReference type="Rhea" id="RHEA:13517"/>
        <dbReference type="ChEBI" id="CHEBI:30616"/>
        <dbReference type="ChEBI" id="CHEBI:58369"/>
        <dbReference type="ChEBI" id="CHEBI:63528"/>
        <dbReference type="ChEBI" id="CHEBI:456216"/>
        <dbReference type="EC" id="2.7.4.9"/>
    </reaction>
</comment>
<comment type="pathway">
    <text>Pyrimidine metabolism; dTTP biosynthesis.</text>
</comment>
<comment type="similarity">
    <text evidence="1">Belongs to the thymidylate kinase family.</text>
</comment>
<comment type="sequence caution" evidence="1">
    <conflict type="erroneous initiation">
        <sequence resource="EMBL-CDS" id="AAM13626"/>
    </conflict>
</comment>
<proteinExistence type="inferred from homology"/>
<name>KTHY_CWPXB</name>
<organismHost>
    <name type="scientific">Bos taurus</name>
    <name type="common">Bovine</name>
    <dbReference type="NCBI Taxonomy" id="9913"/>
</organismHost>
<organismHost>
    <name type="scientific">Felis catus</name>
    <name type="common">Cat</name>
    <name type="synonym">Felis silvestris catus</name>
    <dbReference type="NCBI Taxonomy" id="9685"/>
</organismHost>
<organismHost>
    <name type="scientific">Homo sapiens</name>
    <name type="common">Human</name>
    <dbReference type="NCBI Taxonomy" id="9606"/>
</organismHost>
<organismHost>
    <name type="scientific">Loxodonta africana</name>
    <name type="common">African elephant</name>
    <dbReference type="NCBI Taxonomy" id="9785"/>
</organismHost>
<organismHost>
    <name type="scientific">Microtus agrestis</name>
    <name type="common">Short-tailed field vole</name>
    <dbReference type="NCBI Taxonomy" id="29092"/>
</organismHost>
<organismHost>
    <name type="scientific">Mus musculus</name>
    <name type="common">Mouse</name>
    <dbReference type="NCBI Taxonomy" id="10090"/>
</organismHost>
<organismHost>
    <name type="scientific">Myodes glareolus</name>
    <name type="common">Bank vole</name>
    <name type="synonym">Clethrionomys glareolus</name>
    <dbReference type="NCBI Taxonomy" id="447135"/>
</organismHost>
<organism>
    <name type="scientific">Cowpox virus (strain Brighton Red)</name>
    <name type="common">CPV</name>
    <dbReference type="NCBI Taxonomy" id="265872"/>
    <lineage>
        <taxon>Viruses</taxon>
        <taxon>Varidnaviria</taxon>
        <taxon>Bamfordvirae</taxon>
        <taxon>Nucleocytoviricota</taxon>
        <taxon>Pokkesviricetes</taxon>
        <taxon>Chitovirales</taxon>
        <taxon>Poxviridae</taxon>
        <taxon>Chordopoxvirinae</taxon>
        <taxon>Orthopoxvirus</taxon>
        <taxon>Cowpox virus</taxon>
    </lineage>
</organism>
<evidence type="ECO:0000305" key="1"/>
<keyword id="KW-0067">ATP-binding</keyword>
<keyword id="KW-0418">Kinase</keyword>
<keyword id="KW-0545">Nucleotide biosynthesis</keyword>
<keyword id="KW-0547">Nucleotide-binding</keyword>
<keyword id="KW-0808">Transferase</keyword>
<reference key="1">
    <citation type="submission" date="2003-05" db="EMBL/GenBank/DDBJ databases">
        <authorList>
            <person name="Dietrich F.S."/>
            <person name="Ray C.A."/>
            <person name="Sharma A.D."/>
            <person name="Allen A."/>
            <person name="Pickup D.J."/>
        </authorList>
    </citation>
    <scope>NUCLEOTIDE SEQUENCE [LARGE SCALE GENOMIC DNA]</scope>
</reference>
<feature type="chain" id="PRO_0000155223" description="Thymidylate kinase">
    <location>
        <begin position="1"/>
        <end position="204"/>
    </location>
</feature>
<feature type="binding site" evidence="1">
    <location>
        <begin position="11"/>
        <end position="18"/>
    </location>
    <ligand>
        <name>ATP</name>
        <dbReference type="ChEBI" id="CHEBI:30616"/>
    </ligand>
</feature>
<protein>
    <recommendedName>
        <fullName>Thymidylate kinase</fullName>
        <ecNumber>2.7.4.9</ecNumber>
    </recommendedName>
    <alternativeName>
        <fullName>dTMP kinase</fullName>
    </alternativeName>
</protein>
<dbReference type="EC" id="2.7.4.9"/>
<dbReference type="EMBL" id="AF482758">
    <property type="protein sequence ID" value="AAM13626.1"/>
    <property type="status" value="ALT_INIT"/>
    <property type="molecule type" value="Genomic_DNA"/>
</dbReference>
<dbReference type="SMR" id="Q8QMQ7"/>
<dbReference type="KEGG" id="vg:1486065"/>
<dbReference type="UniPathway" id="UPA00575"/>
<dbReference type="Proteomes" id="UP000152733">
    <property type="component" value="Segment"/>
</dbReference>
<dbReference type="GO" id="GO:0005524">
    <property type="term" value="F:ATP binding"/>
    <property type="evidence" value="ECO:0007669"/>
    <property type="project" value="UniProtKB-KW"/>
</dbReference>
<dbReference type="GO" id="GO:0004798">
    <property type="term" value="F:dTMP kinase activity"/>
    <property type="evidence" value="ECO:0007669"/>
    <property type="project" value="UniProtKB-EC"/>
</dbReference>
<dbReference type="GO" id="GO:0004550">
    <property type="term" value="F:nucleoside diphosphate kinase activity"/>
    <property type="evidence" value="ECO:0007669"/>
    <property type="project" value="TreeGrafter"/>
</dbReference>
<dbReference type="GO" id="GO:0006233">
    <property type="term" value="P:dTDP biosynthetic process"/>
    <property type="evidence" value="ECO:0007669"/>
    <property type="project" value="InterPro"/>
</dbReference>
<dbReference type="GO" id="GO:0006235">
    <property type="term" value="P:dTTP biosynthetic process"/>
    <property type="evidence" value="ECO:0007669"/>
    <property type="project" value="UniProtKB-UniPathway"/>
</dbReference>
<dbReference type="GO" id="GO:0006227">
    <property type="term" value="P:dUDP biosynthetic process"/>
    <property type="evidence" value="ECO:0007669"/>
    <property type="project" value="TreeGrafter"/>
</dbReference>
<dbReference type="Gene3D" id="3.40.50.300">
    <property type="entry name" value="P-loop containing nucleotide triphosphate hydrolases"/>
    <property type="match status" value="1"/>
</dbReference>
<dbReference type="InterPro" id="IPR027417">
    <property type="entry name" value="P-loop_NTPase"/>
</dbReference>
<dbReference type="InterPro" id="IPR039430">
    <property type="entry name" value="Thymidylate_kin-like_dom"/>
</dbReference>
<dbReference type="InterPro" id="IPR018095">
    <property type="entry name" value="Thymidylate_kin_CS"/>
</dbReference>
<dbReference type="InterPro" id="IPR018094">
    <property type="entry name" value="Thymidylate_kinase"/>
</dbReference>
<dbReference type="NCBIfam" id="TIGR00041">
    <property type="entry name" value="DTMP_kinase"/>
    <property type="match status" value="1"/>
</dbReference>
<dbReference type="PANTHER" id="PTHR10344">
    <property type="entry name" value="THYMIDYLATE KINASE"/>
    <property type="match status" value="1"/>
</dbReference>
<dbReference type="PANTHER" id="PTHR10344:SF1">
    <property type="entry name" value="THYMIDYLATE KINASE"/>
    <property type="match status" value="1"/>
</dbReference>
<dbReference type="Pfam" id="PF02223">
    <property type="entry name" value="Thymidylate_kin"/>
    <property type="match status" value="1"/>
</dbReference>
<dbReference type="SUPFAM" id="SSF52540">
    <property type="entry name" value="P-loop containing nucleoside triphosphate hydrolases"/>
    <property type="match status" value="1"/>
</dbReference>
<dbReference type="PROSITE" id="PS01331">
    <property type="entry name" value="THYMIDYLATE_KINASE"/>
    <property type="match status" value="1"/>
</dbReference>
<accession>Q8QMQ7</accession>
<sequence length="204" mass="23205">MSRGALIVFEGLDKSGKTTQCMNIMESIPSNTIKYLNFPQRSTVTGKMIDDYLTRKKTYNDHIVNLLFCANRWEFASFIQEQLEQGITLIVDRYAFSGVAYAAAKGASMTLSKSYESGLPKPDLVIFLESGSKEINRNVGEEIYEDVAFQQKVLQEYKKMIEEGDIHWQIISSEFEEDVKKELIKNIVIEAIHTVTGPVGQLWM</sequence>